<protein>
    <recommendedName>
        <fullName>UPF0758 protein CTC_02075</fullName>
    </recommendedName>
</protein>
<evidence type="ECO:0000255" key="1">
    <source>
        <dbReference type="PROSITE-ProRule" id="PRU01182"/>
    </source>
</evidence>
<evidence type="ECO:0000305" key="2"/>
<feature type="chain" id="PRO_0000190693" description="UPF0758 protein CTC_02075">
    <location>
        <begin position="1"/>
        <end position="228"/>
    </location>
</feature>
<feature type="domain" description="MPN" evidence="1">
    <location>
        <begin position="106"/>
        <end position="228"/>
    </location>
</feature>
<feature type="short sequence motif" description="JAMM motif" evidence="1">
    <location>
        <begin position="177"/>
        <end position="190"/>
    </location>
</feature>
<feature type="binding site" evidence="1">
    <location>
        <position position="177"/>
    </location>
    <ligand>
        <name>Zn(2+)</name>
        <dbReference type="ChEBI" id="CHEBI:29105"/>
        <note>catalytic</note>
    </ligand>
</feature>
<feature type="binding site" evidence="1">
    <location>
        <position position="179"/>
    </location>
    <ligand>
        <name>Zn(2+)</name>
        <dbReference type="ChEBI" id="CHEBI:29105"/>
        <note>catalytic</note>
    </ligand>
</feature>
<feature type="binding site" evidence="1">
    <location>
        <position position="190"/>
    </location>
    <ligand>
        <name>Zn(2+)</name>
        <dbReference type="ChEBI" id="CHEBI:29105"/>
        <note>catalytic</note>
    </ligand>
</feature>
<sequence>MNNAIRIMDLPENERPREKLTRYGVESLSNIELLALILRTGNKSENVISLCARILERCGGLNGLFNANRGELLNINGVGEAKASQILALLELTKRFRSFKSGENYNITNPKDAAYLVMEEMRWLKQEYLKVILLNTKNYVIKVKDVFIGSLNSSIVHPREIFLEAIKNNSYSIIICHNHPSGDTTPSKEDINVSNRIKECGKLIGIELLDHIIIGNGVYISLKEKDIL</sequence>
<organism>
    <name type="scientific">Clostridium tetani (strain Massachusetts / E88)</name>
    <dbReference type="NCBI Taxonomy" id="212717"/>
    <lineage>
        <taxon>Bacteria</taxon>
        <taxon>Bacillati</taxon>
        <taxon>Bacillota</taxon>
        <taxon>Clostridia</taxon>
        <taxon>Eubacteriales</taxon>
        <taxon>Clostridiaceae</taxon>
        <taxon>Clostridium</taxon>
    </lineage>
</organism>
<accession>Q892M1</accession>
<comment type="similarity">
    <text evidence="2">Belongs to the UPF0758 family.</text>
</comment>
<dbReference type="EMBL" id="AE015927">
    <property type="protein sequence ID" value="AAO36574.1"/>
    <property type="molecule type" value="Genomic_DNA"/>
</dbReference>
<dbReference type="RefSeq" id="WP_011100232.1">
    <property type="nucleotide sequence ID" value="NC_004557.1"/>
</dbReference>
<dbReference type="SMR" id="Q892M1"/>
<dbReference type="STRING" id="212717.CTC_02075"/>
<dbReference type="GeneID" id="24254208"/>
<dbReference type="KEGG" id="ctc:CTC_02075"/>
<dbReference type="HOGENOM" id="CLU_073529_0_2_9"/>
<dbReference type="OrthoDB" id="9804482at2"/>
<dbReference type="Proteomes" id="UP000001412">
    <property type="component" value="Chromosome"/>
</dbReference>
<dbReference type="GO" id="GO:0046872">
    <property type="term" value="F:metal ion binding"/>
    <property type="evidence" value="ECO:0007669"/>
    <property type="project" value="UniProtKB-KW"/>
</dbReference>
<dbReference type="GO" id="GO:0008237">
    <property type="term" value="F:metallopeptidase activity"/>
    <property type="evidence" value="ECO:0007669"/>
    <property type="project" value="UniProtKB-KW"/>
</dbReference>
<dbReference type="GO" id="GO:0006508">
    <property type="term" value="P:proteolysis"/>
    <property type="evidence" value="ECO:0007669"/>
    <property type="project" value="UniProtKB-KW"/>
</dbReference>
<dbReference type="CDD" id="cd08071">
    <property type="entry name" value="MPN_DUF2466"/>
    <property type="match status" value="1"/>
</dbReference>
<dbReference type="Gene3D" id="1.10.150.20">
    <property type="entry name" value="5' to 3' exonuclease, C-terminal subdomain"/>
    <property type="match status" value="1"/>
</dbReference>
<dbReference type="Gene3D" id="3.40.140.10">
    <property type="entry name" value="Cytidine Deaminase, domain 2"/>
    <property type="match status" value="1"/>
</dbReference>
<dbReference type="InterPro" id="IPR037518">
    <property type="entry name" value="MPN"/>
</dbReference>
<dbReference type="InterPro" id="IPR025657">
    <property type="entry name" value="RadC_JAB"/>
</dbReference>
<dbReference type="InterPro" id="IPR010994">
    <property type="entry name" value="RuvA_2-like"/>
</dbReference>
<dbReference type="InterPro" id="IPR001405">
    <property type="entry name" value="UPF0758"/>
</dbReference>
<dbReference type="InterPro" id="IPR020891">
    <property type="entry name" value="UPF0758_CS"/>
</dbReference>
<dbReference type="InterPro" id="IPR046778">
    <property type="entry name" value="UPF0758_N"/>
</dbReference>
<dbReference type="NCBIfam" id="NF000642">
    <property type="entry name" value="PRK00024.1"/>
    <property type="match status" value="1"/>
</dbReference>
<dbReference type="NCBIfam" id="TIGR00608">
    <property type="entry name" value="radc"/>
    <property type="match status" value="1"/>
</dbReference>
<dbReference type="PANTHER" id="PTHR30471">
    <property type="entry name" value="DNA REPAIR PROTEIN RADC"/>
    <property type="match status" value="1"/>
</dbReference>
<dbReference type="PANTHER" id="PTHR30471:SF3">
    <property type="entry name" value="UPF0758 PROTEIN YEES-RELATED"/>
    <property type="match status" value="1"/>
</dbReference>
<dbReference type="Pfam" id="PF04002">
    <property type="entry name" value="RadC"/>
    <property type="match status" value="1"/>
</dbReference>
<dbReference type="Pfam" id="PF20582">
    <property type="entry name" value="UPF0758_N"/>
    <property type="match status" value="1"/>
</dbReference>
<dbReference type="SUPFAM" id="SSF47781">
    <property type="entry name" value="RuvA domain 2-like"/>
    <property type="match status" value="1"/>
</dbReference>
<dbReference type="PROSITE" id="PS50249">
    <property type="entry name" value="MPN"/>
    <property type="match status" value="1"/>
</dbReference>
<dbReference type="PROSITE" id="PS01302">
    <property type="entry name" value="UPF0758"/>
    <property type="match status" value="1"/>
</dbReference>
<proteinExistence type="inferred from homology"/>
<reference key="1">
    <citation type="journal article" date="2003" name="Proc. Natl. Acad. Sci. U.S.A.">
        <title>The genome sequence of Clostridium tetani, the causative agent of tetanus disease.</title>
        <authorList>
            <person name="Brueggemann H."/>
            <person name="Baeumer S."/>
            <person name="Fricke W.F."/>
            <person name="Wiezer A."/>
            <person name="Liesegang H."/>
            <person name="Decker I."/>
            <person name="Herzberg C."/>
            <person name="Martinez-Arias R."/>
            <person name="Merkl R."/>
            <person name="Henne A."/>
            <person name="Gottschalk G."/>
        </authorList>
    </citation>
    <scope>NUCLEOTIDE SEQUENCE [LARGE SCALE GENOMIC DNA]</scope>
    <source>
        <strain>Massachusetts / E88</strain>
    </source>
</reference>
<keyword id="KW-0378">Hydrolase</keyword>
<keyword id="KW-0479">Metal-binding</keyword>
<keyword id="KW-0482">Metalloprotease</keyword>
<keyword id="KW-0645">Protease</keyword>
<keyword id="KW-1185">Reference proteome</keyword>
<keyword id="KW-0862">Zinc</keyword>
<gene>
    <name type="ordered locus">CTC_02075</name>
</gene>
<name>Y2075_CLOTE</name>